<protein>
    <recommendedName>
        <fullName evidence="1">Nucleoid-associated protein CKO_00588</fullName>
    </recommendedName>
</protein>
<gene>
    <name type="ordered locus">CKO_00588</name>
</gene>
<evidence type="ECO:0000255" key="1">
    <source>
        <dbReference type="HAMAP-Rule" id="MF_00730"/>
    </source>
</evidence>
<sequence>MSLDINQIALHQLIKRDEQNLELVLRDSLLEPTTTVVDMVAELHRVYSAKNKAYGLFSEESELAQTLRLQRQGEEDFLAFSRAATGRLRDELAKYPFADGGIVLFCHYRYLAVEYLLVAVLNNLSSMRVNENLDINPTHYLDINHADIVARIDLTEWETNPESTRYLTFLKGRVGRKVADFFMDFLGASEGLNAKAQNRGLLQAVDDFTAEAQLDKAERQNVRQQVYSYCNEQLQSGEEIELESLSKELSGVSEVSFREFTADKGYELEESFPADRSTLRQLTKYAGSGGGLTINFDAMLLGERIFWDPATDTLTIKGTPPNLRDQLQRRTSGGN</sequence>
<proteinExistence type="inferred from homology"/>
<reference key="1">
    <citation type="submission" date="2007-08" db="EMBL/GenBank/DDBJ databases">
        <authorList>
            <consortium name="The Citrobacter koseri Genome Sequencing Project"/>
            <person name="McClelland M."/>
            <person name="Sanderson E.K."/>
            <person name="Porwollik S."/>
            <person name="Spieth J."/>
            <person name="Clifton W.S."/>
            <person name="Latreille P."/>
            <person name="Courtney L."/>
            <person name="Wang C."/>
            <person name="Pepin K."/>
            <person name="Bhonagiri V."/>
            <person name="Nash W."/>
            <person name="Johnson M."/>
            <person name="Thiruvilangam P."/>
            <person name="Wilson R."/>
        </authorList>
    </citation>
    <scope>NUCLEOTIDE SEQUENCE [LARGE SCALE GENOMIC DNA]</scope>
    <source>
        <strain>ATCC BAA-895 / CDC 4225-83 / SGSC4696</strain>
    </source>
</reference>
<dbReference type="EMBL" id="CP000822">
    <property type="protein sequence ID" value="ABV11742.1"/>
    <property type="molecule type" value="Genomic_DNA"/>
</dbReference>
<dbReference type="SMR" id="A8AE29"/>
<dbReference type="STRING" id="290338.CKO_00588"/>
<dbReference type="GeneID" id="45134822"/>
<dbReference type="KEGG" id="cko:CKO_00588"/>
<dbReference type="HOGENOM" id="CLU_063050_0_1_6"/>
<dbReference type="OrthoDB" id="9131762at2"/>
<dbReference type="Proteomes" id="UP000008148">
    <property type="component" value="Chromosome"/>
</dbReference>
<dbReference type="GO" id="GO:0043590">
    <property type="term" value="C:bacterial nucleoid"/>
    <property type="evidence" value="ECO:0007669"/>
    <property type="project" value="TreeGrafter"/>
</dbReference>
<dbReference type="GO" id="GO:0005737">
    <property type="term" value="C:cytoplasm"/>
    <property type="evidence" value="ECO:0007669"/>
    <property type="project" value="UniProtKB-UniRule"/>
</dbReference>
<dbReference type="GO" id="GO:0003690">
    <property type="term" value="F:double-stranded DNA binding"/>
    <property type="evidence" value="ECO:0007669"/>
    <property type="project" value="TreeGrafter"/>
</dbReference>
<dbReference type="GO" id="GO:0003727">
    <property type="term" value="F:single-stranded RNA binding"/>
    <property type="evidence" value="ECO:0007669"/>
    <property type="project" value="TreeGrafter"/>
</dbReference>
<dbReference type="HAMAP" id="MF_00730">
    <property type="entry name" value="NdpA"/>
    <property type="match status" value="1"/>
</dbReference>
<dbReference type="InterPro" id="IPR007358">
    <property type="entry name" value="Nucleoid_associated_NdpA"/>
</dbReference>
<dbReference type="NCBIfam" id="NF001557">
    <property type="entry name" value="PRK00378.1"/>
    <property type="match status" value="1"/>
</dbReference>
<dbReference type="PANTHER" id="PTHR38772">
    <property type="match status" value="1"/>
</dbReference>
<dbReference type="PANTHER" id="PTHR38772:SF1">
    <property type="entry name" value="NUCLEOID-ASSOCIATED PROTEIN YEJK"/>
    <property type="match status" value="1"/>
</dbReference>
<dbReference type="Pfam" id="PF04245">
    <property type="entry name" value="NA37"/>
    <property type="match status" value="1"/>
</dbReference>
<keyword id="KW-0963">Cytoplasm</keyword>
<keyword id="KW-1185">Reference proteome</keyword>
<organism>
    <name type="scientific">Citrobacter koseri (strain ATCC BAA-895 / CDC 4225-83 / SGSC4696)</name>
    <dbReference type="NCBI Taxonomy" id="290338"/>
    <lineage>
        <taxon>Bacteria</taxon>
        <taxon>Pseudomonadati</taxon>
        <taxon>Pseudomonadota</taxon>
        <taxon>Gammaproteobacteria</taxon>
        <taxon>Enterobacterales</taxon>
        <taxon>Enterobacteriaceae</taxon>
        <taxon>Citrobacter</taxon>
    </lineage>
</organism>
<accession>A8AE29</accession>
<name>NDPA_CITK8</name>
<comment type="subcellular location">
    <subcellularLocation>
        <location evidence="1">Cytoplasm</location>
        <location evidence="1">Nucleoid</location>
    </subcellularLocation>
</comment>
<comment type="similarity">
    <text evidence="1">Belongs to the YejK family.</text>
</comment>
<feature type="chain" id="PRO_1000045921" description="Nucleoid-associated protein CKO_00588">
    <location>
        <begin position="1"/>
        <end position="335"/>
    </location>
</feature>